<dbReference type="EC" id="6.1.1.3" evidence="1"/>
<dbReference type="EMBL" id="M36593">
    <property type="protein sequence ID" value="AAA22863.1"/>
    <property type="molecule type" value="Genomic_DNA"/>
</dbReference>
<dbReference type="EMBL" id="AL009126">
    <property type="protein sequence ID" value="CAB15783.2"/>
    <property type="molecule type" value="Genomic_DNA"/>
</dbReference>
<dbReference type="EMBL" id="Z80360">
    <property type="protein sequence ID" value="CAB02510.1"/>
    <property type="molecule type" value="Genomic_DNA"/>
</dbReference>
<dbReference type="PIR" id="A37770">
    <property type="entry name" value="YSBST2"/>
</dbReference>
<dbReference type="RefSeq" id="NP_391636.2">
    <property type="nucleotide sequence ID" value="NC_000964.3"/>
</dbReference>
<dbReference type="SMR" id="P18256"/>
<dbReference type="FunCoup" id="P18256">
    <property type="interactions" value="664"/>
</dbReference>
<dbReference type="STRING" id="224308.BSU37560"/>
<dbReference type="PaxDb" id="224308-BSU37560"/>
<dbReference type="EnsemblBacteria" id="CAB15783">
    <property type="protein sequence ID" value="CAB15783"/>
    <property type="gene ID" value="BSU_37560"/>
</dbReference>
<dbReference type="GeneID" id="937135"/>
<dbReference type="KEGG" id="bsu:BSU37560"/>
<dbReference type="PATRIC" id="fig|224308.179.peg.4067"/>
<dbReference type="eggNOG" id="COG0441">
    <property type="taxonomic scope" value="Bacteria"/>
</dbReference>
<dbReference type="InParanoid" id="P18256"/>
<dbReference type="OrthoDB" id="9802304at2"/>
<dbReference type="PhylomeDB" id="P18256"/>
<dbReference type="BioCyc" id="BSUB:BSU37560-MONOMER"/>
<dbReference type="Proteomes" id="UP000001570">
    <property type="component" value="Chromosome"/>
</dbReference>
<dbReference type="GO" id="GO:0005737">
    <property type="term" value="C:cytoplasm"/>
    <property type="evidence" value="ECO:0007669"/>
    <property type="project" value="UniProtKB-SubCell"/>
</dbReference>
<dbReference type="GO" id="GO:0005524">
    <property type="term" value="F:ATP binding"/>
    <property type="evidence" value="ECO:0007669"/>
    <property type="project" value="UniProtKB-UniRule"/>
</dbReference>
<dbReference type="GO" id="GO:0140096">
    <property type="term" value="F:catalytic activity, acting on a protein"/>
    <property type="evidence" value="ECO:0007669"/>
    <property type="project" value="UniProtKB-ARBA"/>
</dbReference>
<dbReference type="GO" id="GO:0046872">
    <property type="term" value="F:metal ion binding"/>
    <property type="evidence" value="ECO:0007669"/>
    <property type="project" value="UniProtKB-KW"/>
</dbReference>
<dbReference type="GO" id="GO:0004829">
    <property type="term" value="F:threonine-tRNA ligase activity"/>
    <property type="evidence" value="ECO:0000318"/>
    <property type="project" value="GO_Central"/>
</dbReference>
<dbReference type="GO" id="GO:0016740">
    <property type="term" value="F:transferase activity"/>
    <property type="evidence" value="ECO:0007669"/>
    <property type="project" value="UniProtKB-ARBA"/>
</dbReference>
<dbReference type="GO" id="GO:0000049">
    <property type="term" value="F:tRNA binding"/>
    <property type="evidence" value="ECO:0007669"/>
    <property type="project" value="UniProtKB-KW"/>
</dbReference>
<dbReference type="GO" id="GO:0006435">
    <property type="term" value="P:threonyl-tRNA aminoacylation"/>
    <property type="evidence" value="ECO:0000318"/>
    <property type="project" value="GO_Central"/>
</dbReference>
<dbReference type="CDD" id="cd01667">
    <property type="entry name" value="TGS_ThrRS"/>
    <property type="match status" value="1"/>
</dbReference>
<dbReference type="CDD" id="cd00860">
    <property type="entry name" value="ThrRS_anticodon"/>
    <property type="match status" value="1"/>
</dbReference>
<dbReference type="CDD" id="cd00771">
    <property type="entry name" value="ThrRS_core"/>
    <property type="match status" value="1"/>
</dbReference>
<dbReference type="FunFam" id="3.10.20.30:FF:000005">
    <property type="entry name" value="Threonine--tRNA ligase"/>
    <property type="match status" value="1"/>
</dbReference>
<dbReference type="FunFam" id="3.30.54.20:FF:000002">
    <property type="entry name" value="Threonine--tRNA ligase"/>
    <property type="match status" value="1"/>
</dbReference>
<dbReference type="FunFam" id="3.30.930.10:FF:000002">
    <property type="entry name" value="Threonine--tRNA ligase"/>
    <property type="match status" value="1"/>
</dbReference>
<dbReference type="FunFam" id="3.40.50.800:FF:000001">
    <property type="entry name" value="Threonine--tRNA ligase"/>
    <property type="match status" value="1"/>
</dbReference>
<dbReference type="FunFam" id="3.30.980.10:FF:000005">
    <property type="entry name" value="Threonyl-tRNA synthetase, mitochondrial"/>
    <property type="match status" value="1"/>
</dbReference>
<dbReference type="Gene3D" id="3.10.20.30">
    <property type="match status" value="1"/>
</dbReference>
<dbReference type="Gene3D" id="3.30.54.20">
    <property type="match status" value="1"/>
</dbReference>
<dbReference type="Gene3D" id="3.40.50.800">
    <property type="entry name" value="Anticodon-binding domain"/>
    <property type="match status" value="1"/>
</dbReference>
<dbReference type="Gene3D" id="3.30.930.10">
    <property type="entry name" value="Bira Bifunctional Protein, Domain 2"/>
    <property type="match status" value="1"/>
</dbReference>
<dbReference type="Gene3D" id="3.30.980.10">
    <property type="entry name" value="Threonyl-trna Synthetase, Chain A, domain 2"/>
    <property type="match status" value="1"/>
</dbReference>
<dbReference type="HAMAP" id="MF_00184">
    <property type="entry name" value="Thr_tRNA_synth"/>
    <property type="match status" value="1"/>
</dbReference>
<dbReference type="InterPro" id="IPR002314">
    <property type="entry name" value="aa-tRNA-synt_IIb"/>
</dbReference>
<dbReference type="InterPro" id="IPR006195">
    <property type="entry name" value="aa-tRNA-synth_II"/>
</dbReference>
<dbReference type="InterPro" id="IPR045864">
    <property type="entry name" value="aa-tRNA-synth_II/BPL/LPL"/>
</dbReference>
<dbReference type="InterPro" id="IPR004154">
    <property type="entry name" value="Anticodon-bd"/>
</dbReference>
<dbReference type="InterPro" id="IPR036621">
    <property type="entry name" value="Anticodon-bd_dom_sf"/>
</dbReference>
<dbReference type="InterPro" id="IPR012675">
    <property type="entry name" value="Beta-grasp_dom_sf"/>
</dbReference>
<dbReference type="InterPro" id="IPR004095">
    <property type="entry name" value="TGS"/>
</dbReference>
<dbReference type="InterPro" id="IPR012676">
    <property type="entry name" value="TGS-like"/>
</dbReference>
<dbReference type="InterPro" id="IPR002320">
    <property type="entry name" value="Thr-tRNA-ligase_IIa"/>
</dbReference>
<dbReference type="InterPro" id="IPR018163">
    <property type="entry name" value="Thr/Ala-tRNA-synth_IIc_edit"/>
</dbReference>
<dbReference type="InterPro" id="IPR047246">
    <property type="entry name" value="ThrRS_anticodon"/>
</dbReference>
<dbReference type="InterPro" id="IPR033728">
    <property type="entry name" value="ThrRS_core"/>
</dbReference>
<dbReference type="InterPro" id="IPR012947">
    <property type="entry name" value="tRNA_SAD"/>
</dbReference>
<dbReference type="NCBIfam" id="TIGR00418">
    <property type="entry name" value="thrS"/>
    <property type="match status" value="1"/>
</dbReference>
<dbReference type="PANTHER" id="PTHR11451:SF44">
    <property type="entry name" value="THREONINE--TRNA LIGASE, CHLOROPLASTIC_MITOCHONDRIAL 2"/>
    <property type="match status" value="1"/>
</dbReference>
<dbReference type="PANTHER" id="PTHR11451">
    <property type="entry name" value="THREONINE-TRNA LIGASE"/>
    <property type="match status" value="1"/>
</dbReference>
<dbReference type="Pfam" id="PF03129">
    <property type="entry name" value="HGTP_anticodon"/>
    <property type="match status" value="1"/>
</dbReference>
<dbReference type="Pfam" id="PF02824">
    <property type="entry name" value="TGS"/>
    <property type="match status" value="1"/>
</dbReference>
<dbReference type="Pfam" id="PF00587">
    <property type="entry name" value="tRNA-synt_2b"/>
    <property type="match status" value="1"/>
</dbReference>
<dbReference type="Pfam" id="PF07973">
    <property type="entry name" value="tRNA_SAD"/>
    <property type="match status" value="1"/>
</dbReference>
<dbReference type="PRINTS" id="PR01047">
    <property type="entry name" value="TRNASYNTHTHR"/>
</dbReference>
<dbReference type="SMART" id="SM00863">
    <property type="entry name" value="tRNA_SAD"/>
    <property type="match status" value="1"/>
</dbReference>
<dbReference type="SUPFAM" id="SSF52954">
    <property type="entry name" value="Class II aaRS ABD-related"/>
    <property type="match status" value="1"/>
</dbReference>
<dbReference type="SUPFAM" id="SSF55681">
    <property type="entry name" value="Class II aaRS and biotin synthetases"/>
    <property type="match status" value="1"/>
</dbReference>
<dbReference type="SUPFAM" id="SSF81271">
    <property type="entry name" value="TGS-like"/>
    <property type="match status" value="1"/>
</dbReference>
<dbReference type="SUPFAM" id="SSF55186">
    <property type="entry name" value="ThrRS/AlaRS common domain"/>
    <property type="match status" value="1"/>
</dbReference>
<dbReference type="PROSITE" id="PS50862">
    <property type="entry name" value="AA_TRNA_LIGASE_II"/>
    <property type="match status" value="1"/>
</dbReference>
<dbReference type="PROSITE" id="PS51880">
    <property type="entry name" value="TGS"/>
    <property type="match status" value="1"/>
</dbReference>
<gene>
    <name type="primary">thrZ</name>
    <name type="synonym">thrS2</name>
    <name type="ordered locus">BSU37560</name>
</gene>
<protein>
    <recommendedName>
        <fullName evidence="1">Threonine--tRNA ligase 2</fullName>
        <ecNumber evidence="1">6.1.1.3</ecNumber>
    </recommendedName>
    <alternativeName>
        <fullName evidence="1">Threonyl-tRNA synthetase 2</fullName>
        <shortName evidence="1">ThrRS 2</shortName>
    </alternativeName>
</protein>
<keyword id="KW-0030">Aminoacyl-tRNA synthetase</keyword>
<keyword id="KW-0067">ATP-binding</keyword>
<keyword id="KW-0963">Cytoplasm</keyword>
<keyword id="KW-0436">Ligase</keyword>
<keyword id="KW-0479">Metal-binding</keyword>
<keyword id="KW-0547">Nucleotide-binding</keyword>
<keyword id="KW-0648">Protein biosynthesis</keyword>
<keyword id="KW-1185">Reference proteome</keyword>
<keyword id="KW-0694">RNA-binding</keyword>
<keyword id="KW-0820">tRNA-binding</keyword>
<keyword id="KW-0862">Zinc</keyword>
<sequence length="638" mass="73388">MSKHVHIQLPDGQIQEYPKGITIKEAAGSISSSLQKKAAAGQVNGKLVDLSFKLEEDAELSIVTLDSQEGLQVLRHTTAHVLAQAVKRLYGEVSLGVGPVILDGFYYDMKLGKSLASGDLEAIEKEMKNIINENLEIKRIEVSYEEAEELFAQKDERLKLEILKDIPRGEDITLYQQGEFVDLCRGPHLPSTGMIKAFKLTRVSGAYWRGDSKNEVLQRVYGVAFQKKKDLDAHLHMLEEAAKRDHRKLGKQLGLFMFSEEAPGMPFYLPKGQIVRNELERFSRELQTNAGYDEVRTPFMMNQRLWEQSGHWDHYRDNMYFSEVDDTRFAMKPMNCPGHMLIFKNSLYSYRDLPIRMAEFGQVHRHEYSGALNGMLRVRTFCQDDAHIFVREDQIESEIKEAIRLIDEVYRTFGFEYSVELSTRPEDSLGDDSLWEASERALARVLEELGLSYEINEGDGAFYGPKIDFHIKDALKRSHQCATIQLDFQMPEKFDLTYINELNEKVRPVVIHRAVFGSIDRFFGILIEHYGGAFPVWLAPIQVQIIPVSHVHLDYCRKVQAELKQAGIRAGIDERNEKLGYKIRESQVQKIPYVLVLGDHEEQENAVNVRRFGHQQNEHVPFQTFKDKLVKQVENRGM</sequence>
<reference key="1">
    <citation type="journal article" date="1990" name="J. Bacteriol.">
        <title>Independent genes for two threonyl-tRNA synthetases in Bacillus subtilis.</title>
        <authorList>
            <person name="Putzer H."/>
            <person name="Brakhage A."/>
            <person name="Grunberg-Manago M."/>
        </authorList>
    </citation>
    <scope>NUCLEOTIDE SEQUENCE [GENOMIC DNA]</scope>
</reference>
<reference key="2">
    <citation type="journal article" date="1997" name="Nature">
        <title>The complete genome sequence of the Gram-positive bacterium Bacillus subtilis.</title>
        <authorList>
            <person name="Kunst F."/>
            <person name="Ogasawara N."/>
            <person name="Moszer I."/>
            <person name="Albertini A.M."/>
            <person name="Alloni G."/>
            <person name="Azevedo V."/>
            <person name="Bertero M.G."/>
            <person name="Bessieres P."/>
            <person name="Bolotin A."/>
            <person name="Borchert S."/>
            <person name="Borriss R."/>
            <person name="Boursier L."/>
            <person name="Brans A."/>
            <person name="Braun M."/>
            <person name="Brignell S.C."/>
            <person name="Bron S."/>
            <person name="Brouillet S."/>
            <person name="Bruschi C.V."/>
            <person name="Caldwell B."/>
            <person name="Capuano V."/>
            <person name="Carter N.M."/>
            <person name="Choi S.-K."/>
            <person name="Codani J.-J."/>
            <person name="Connerton I.F."/>
            <person name="Cummings N.J."/>
            <person name="Daniel R.A."/>
            <person name="Denizot F."/>
            <person name="Devine K.M."/>
            <person name="Duesterhoeft A."/>
            <person name="Ehrlich S.D."/>
            <person name="Emmerson P.T."/>
            <person name="Entian K.-D."/>
            <person name="Errington J."/>
            <person name="Fabret C."/>
            <person name="Ferrari E."/>
            <person name="Foulger D."/>
            <person name="Fritz C."/>
            <person name="Fujita M."/>
            <person name="Fujita Y."/>
            <person name="Fuma S."/>
            <person name="Galizzi A."/>
            <person name="Galleron N."/>
            <person name="Ghim S.-Y."/>
            <person name="Glaser P."/>
            <person name="Goffeau A."/>
            <person name="Golightly E.J."/>
            <person name="Grandi G."/>
            <person name="Guiseppi G."/>
            <person name="Guy B.J."/>
            <person name="Haga K."/>
            <person name="Haiech J."/>
            <person name="Harwood C.R."/>
            <person name="Henaut A."/>
            <person name="Hilbert H."/>
            <person name="Holsappel S."/>
            <person name="Hosono S."/>
            <person name="Hullo M.-F."/>
            <person name="Itaya M."/>
            <person name="Jones L.-M."/>
            <person name="Joris B."/>
            <person name="Karamata D."/>
            <person name="Kasahara Y."/>
            <person name="Klaerr-Blanchard M."/>
            <person name="Klein C."/>
            <person name="Kobayashi Y."/>
            <person name="Koetter P."/>
            <person name="Koningstein G."/>
            <person name="Krogh S."/>
            <person name="Kumano M."/>
            <person name="Kurita K."/>
            <person name="Lapidus A."/>
            <person name="Lardinois S."/>
            <person name="Lauber J."/>
            <person name="Lazarevic V."/>
            <person name="Lee S.-M."/>
            <person name="Levine A."/>
            <person name="Liu H."/>
            <person name="Masuda S."/>
            <person name="Mauel C."/>
            <person name="Medigue C."/>
            <person name="Medina N."/>
            <person name="Mellado R.P."/>
            <person name="Mizuno M."/>
            <person name="Moestl D."/>
            <person name="Nakai S."/>
            <person name="Noback M."/>
            <person name="Noone D."/>
            <person name="O'Reilly M."/>
            <person name="Ogawa K."/>
            <person name="Ogiwara A."/>
            <person name="Oudega B."/>
            <person name="Park S.-H."/>
            <person name="Parro V."/>
            <person name="Pohl T.M."/>
            <person name="Portetelle D."/>
            <person name="Porwollik S."/>
            <person name="Prescott A.M."/>
            <person name="Presecan E."/>
            <person name="Pujic P."/>
            <person name="Purnelle B."/>
            <person name="Rapoport G."/>
            <person name="Rey M."/>
            <person name="Reynolds S."/>
            <person name="Rieger M."/>
            <person name="Rivolta C."/>
            <person name="Rocha E."/>
            <person name="Roche B."/>
            <person name="Rose M."/>
            <person name="Sadaie Y."/>
            <person name="Sato T."/>
            <person name="Scanlan E."/>
            <person name="Schleich S."/>
            <person name="Schroeter R."/>
            <person name="Scoffone F."/>
            <person name="Sekiguchi J."/>
            <person name="Sekowska A."/>
            <person name="Seror S.J."/>
            <person name="Serror P."/>
            <person name="Shin B.-S."/>
            <person name="Soldo B."/>
            <person name="Sorokin A."/>
            <person name="Tacconi E."/>
            <person name="Takagi T."/>
            <person name="Takahashi H."/>
            <person name="Takemaru K."/>
            <person name="Takeuchi M."/>
            <person name="Tamakoshi A."/>
            <person name="Tanaka T."/>
            <person name="Terpstra P."/>
            <person name="Tognoni A."/>
            <person name="Tosato V."/>
            <person name="Uchiyama S."/>
            <person name="Vandenbol M."/>
            <person name="Vannier F."/>
            <person name="Vassarotti A."/>
            <person name="Viari A."/>
            <person name="Wambutt R."/>
            <person name="Wedler E."/>
            <person name="Wedler H."/>
            <person name="Weitzenegger T."/>
            <person name="Winters P."/>
            <person name="Wipat A."/>
            <person name="Yamamoto H."/>
            <person name="Yamane K."/>
            <person name="Yasumoto K."/>
            <person name="Yata K."/>
            <person name="Yoshida K."/>
            <person name="Yoshikawa H.-F."/>
            <person name="Zumstein E."/>
            <person name="Yoshikawa H."/>
            <person name="Danchin A."/>
        </authorList>
    </citation>
    <scope>NUCLEOTIDE SEQUENCE [LARGE SCALE GENOMIC DNA]</scope>
    <source>
        <strain>168</strain>
    </source>
</reference>
<reference key="3">
    <citation type="journal article" date="2009" name="Microbiology">
        <title>From a consortium sequence to a unified sequence: the Bacillus subtilis 168 reference genome a decade later.</title>
        <authorList>
            <person name="Barbe V."/>
            <person name="Cruveiller S."/>
            <person name="Kunst F."/>
            <person name="Lenoble P."/>
            <person name="Meurice G."/>
            <person name="Sekowska A."/>
            <person name="Vallenet D."/>
            <person name="Wang T."/>
            <person name="Moszer I."/>
            <person name="Medigue C."/>
            <person name="Danchin A."/>
        </authorList>
    </citation>
    <scope>SEQUENCE REVISION TO 74</scope>
</reference>
<reference key="4">
    <citation type="journal article" date="1997" name="Microbiology">
        <title>The Bacillus subtilis genome from gerBC (311 degrees) to licR (334 degrees).</title>
        <authorList>
            <person name="Presecan E."/>
            <person name="Moszer I."/>
            <person name="Boursier L."/>
            <person name="Cruz Ramos H."/>
            <person name="De La Fuente V."/>
            <person name="Hullo M.-F."/>
            <person name="Lelong C."/>
            <person name="Schleich S."/>
            <person name="Sekowska A."/>
            <person name="Song B.H."/>
            <person name="Villani G."/>
            <person name="Kunst F."/>
            <person name="Danchin A."/>
            <person name="Glaser P."/>
        </authorList>
    </citation>
    <scope>NUCLEOTIDE SEQUENCE [GENOMIC DNA] OF 38-638</scope>
    <source>
        <strain>168</strain>
    </source>
</reference>
<reference key="5">
    <citation type="journal article" date="1992" name="EMBO J.">
        <title>Co-ordinate expression of the two threonyl-tRNA synthetase genes in Bacillus subtilis: control by transcriptional antitermination involving a conserved regulatory sequence.</title>
        <authorList>
            <person name="Putzer H."/>
            <person name="Gendron N."/>
            <person name="Grunberg-Manago M."/>
        </authorList>
    </citation>
    <scope>DEVELOPMENTAL STAGE</scope>
</reference>
<proteinExistence type="evidence at transcript level"/>
<organism>
    <name type="scientific">Bacillus subtilis (strain 168)</name>
    <dbReference type="NCBI Taxonomy" id="224308"/>
    <lineage>
        <taxon>Bacteria</taxon>
        <taxon>Bacillati</taxon>
        <taxon>Bacillota</taxon>
        <taxon>Bacilli</taxon>
        <taxon>Bacillales</taxon>
        <taxon>Bacillaceae</taxon>
        <taxon>Bacillus</taxon>
    </lineage>
</organism>
<name>SYT2_BACSU</name>
<feature type="chain" id="PRO_0000100939" description="Threonine--tRNA ligase 2">
    <location>
        <begin position="1"/>
        <end position="638"/>
    </location>
</feature>
<feature type="domain" description="TGS" evidence="2">
    <location>
        <begin position="1"/>
        <end position="64"/>
    </location>
</feature>
<feature type="region of interest" description="Catalytic" evidence="1">
    <location>
        <begin position="245"/>
        <end position="535"/>
    </location>
</feature>
<feature type="binding site" evidence="1">
    <location>
        <position position="336"/>
    </location>
    <ligand>
        <name>Zn(2+)</name>
        <dbReference type="ChEBI" id="CHEBI:29105"/>
    </ligand>
</feature>
<feature type="binding site" evidence="1">
    <location>
        <position position="387"/>
    </location>
    <ligand>
        <name>Zn(2+)</name>
        <dbReference type="ChEBI" id="CHEBI:29105"/>
    </ligand>
</feature>
<feature type="binding site" evidence="1">
    <location>
        <position position="512"/>
    </location>
    <ligand>
        <name>Zn(2+)</name>
        <dbReference type="ChEBI" id="CHEBI:29105"/>
    </ligand>
</feature>
<feature type="sequence conflict" description="In Ref. 1; AAA22863." evidence="4" ref="1">
    <original>L</original>
    <variation>V</variation>
    <location>
        <position position="74"/>
    </location>
</feature>
<accession>P18256</accession>
<accession>P70992</accession>
<evidence type="ECO:0000255" key="1">
    <source>
        <dbReference type="HAMAP-Rule" id="MF_00184"/>
    </source>
</evidence>
<evidence type="ECO:0000255" key="2">
    <source>
        <dbReference type="PROSITE-ProRule" id="PRU01228"/>
    </source>
</evidence>
<evidence type="ECO:0000269" key="3">
    <source>
    </source>
</evidence>
<evidence type="ECO:0000305" key="4"/>
<comment type="function">
    <text evidence="1">Catalyzes the attachment of threonine to tRNA(Thr) in a two-step reaction: L-threonine is first activated by ATP to form Thr-AMP and then transferred to the acceptor end of tRNA(Thr). Also edits incorrectly charged L-seryl-tRNA(Thr).</text>
</comment>
<comment type="catalytic activity">
    <reaction evidence="1">
        <text>tRNA(Thr) + L-threonine + ATP = L-threonyl-tRNA(Thr) + AMP + diphosphate + H(+)</text>
        <dbReference type="Rhea" id="RHEA:24624"/>
        <dbReference type="Rhea" id="RHEA-COMP:9670"/>
        <dbReference type="Rhea" id="RHEA-COMP:9704"/>
        <dbReference type="ChEBI" id="CHEBI:15378"/>
        <dbReference type="ChEBI" id="CHEBI:30616"/>
        <dbReference type="ChEBI" id="CHEBI:33019"/>
        <dbReference type="ChEBI" id="CHEBI:57926"/>
        <dbReference type="ChEBI" id="CHEBI:78442"/>
        <dbReference type="ChEBI" id="CHEBI:78534"/>
        <dbReference type="ChEBI" id="CHEBI:456215"/>
        <dbReference type="EC" id="6.1.1.3"/>
    </reaction>
</comment>
<comment type="cofactor">
    <cofactor evidence="1">
        <name>Zn(2+)</name>
        <dbReference type="ChEBI" id="CHEBI:29105"/>
    </cofactor>
    <text evidence="1">Binds 1 zinc ion per subunit.</text>
</comment>
<comment type="subunit">
    <text evidence="1">Homodimer.</text>
</comment>
<comment type="subcellular location">
    <subcellularLocation>
        <location evidence="1">Cytoplasm</location>
    </subcellularLocation>
</comment>
<comment type="developmental stage">
    <text evidence="3">Normally not expressed. Its expression is induced when that of thrS is reduced.</text>
</comment>
<comment type="similarity">
    <text evidence="1">Belongs to the class-II aminoacyl-tRNA synthetase family.</text>
</comment>